<protein>
    <recommendedName>
        <fullName evidence="5 6">Salivary antigen-5</fullName>
    </recommendedName>
    <alternativeName>
        <fullName evidence="6">DMAV</fullName>
    </alternativeName>
</protein>
<evidence type="ECO:0000255" key="1"/>
<evidence type="ECO:0000255" key="2">
    <source>
        <dbReference type="PROSITE-ProRule" id="PRU00498"/>
    </source>
</evidence>
<evidence type="ECO:0000269" key="3">
    <source>
    </source>
</evidence>
<evidence type="ECO:0000269" key="4">
    <source>
    </source>
</evidence>
<evidence type="ECO:0000303" key="5">
    <source>
    </source>
</evidence>
<evidence type="ECO:0000303" key="6">
    <source>
    </source>
</evidence>
<evidence type="ECO:0000305" key="7"/>
<evidence type="ECO:0000305" key="8">
    <source>
    </source>
</evidence>
<evidence type="ECO:0000312" key="9">
    <source>
        <dbReference type="EMBL" id="AEM97973.1"/>
    </source>
</evidence>
<evidence type="ECO:0000312" key="10">
    <source>
        <dbReference type="EMBL" id="AEM97975.1"/>
    </source>
</evidence>
<proteinExistence type="evidence at protein level"/>
<comment type="function">
    <text evidence="4">Antioxidant protein that scavenges superoxide radicals (PubMed:23564450). Removes superoxide radicals produced by PMA-stimulated host neutrophils (PubMed:23564450). Inhibits host platelet aggregation induced by low doses of collagen by interfering with the pro-aggregatory properties of reactive oxygen species on platelets (PubMed:23564450). Binds to heparin and sulfated glycosaminoglycans (PubMed:23564450).</text>
</comment>
<comment type="cofactor">
    <cofactor evidence="4">
        <name>Cu(2+)</name>
        <dbReference type="ChEBI" id="CHEBI:29036"/>
    </cofactor>
</comment>
<comment type="subunit">
    <text evidence="4">Monomeric in solution.</text>
</comment>
<comment type="subcellular location">
    <subcellularLocation>
        <location evidence="8">Secreted</location>
    </subcellularLocation>
</comment>
<comment type="tissue specificity">
    <text evidence="3 4">Saliva (at protein level) (PubMed:21058630). Salivary gland (at protein level) (PubMed:23564450).</text>
</comment>
<comment type="miscellaneous">
    <text evidence="4">Does not affect blood coagulation (PubMed:23564450). Does not interfere with endothelial cell proliferation (PubMed:23564450). Does not exhibit vasodilation activity (PubMed:23564450). Does not inhibit the complement cascade (PubMed:23564450).</text>
</comment>
<comment type="similarity">
    <text evidence="7">Belongs to the CRISP family. Venom allergen 5-like subfamily.</text>
</comment>
<reference evidence="9 10" key="1">
    <citation type="journal article" date="2011" name="J. Proteome Res.">
        <title>Insight into the salivary transcriptome and proteome of Dipetalogaster maxima.</title>
        <authorList>
            <person name="Assumpcao T.C."/>
            <person name="Charneau S."/>
            <person name="Santiago P.B."/>
            <person name="Francischetti I.M."/>
            <person name="Meng Z."/>
            <person name="Araujo C.N."/>
            <person name="Pham V.M."/>
            <person name="Queiroz R.M."/>
            <person name="de Castro C.N."/>
            <person name="Ricart C.A."/>
            <person name="Santana J.M."/>
            <person name="Ribeiro J.M."/>
        </authorList>
    </citation>
    <scope>NUCLEOTIDE SEQUENCE [LARGE SCALE MRNA]</scope>
    <scope>IDENTIFICATION BY MASS SPECTROMETRY</scope>
    <scope>TISSUE SPECIFICITY</scope>
    <source>
        <tissue evidence="9 10">Salivary gland</tissue>
    </source>
</reference>
<reference evidence="7" key="2">
    <citation type="journal article" date="2013" name="J. Biol. Chem.">
        <title>Salivary antigen-5/CAP family members are Cu2+-dependent antioxidant enzymes that scavenge O(2)-. and inhibit collagen-induced platelet aggregation and neutrophil oxidative burst.</title>
        <authorList>
            <person name="Assumpcao T.C.F."/>
            <person name="Ma D."/>
            <person name="Schwarz A."/>
            <person name="Reiter K."/>
            <person name="Santana J.M."/>
            <person name="Andersen J.F."/>
            <person name="Ribeiro J.M.C."/>
            <person name="Nardone G."/>
            <person name="Yu L.L."/>
            <person name="Francischetti I.M.B."/>
        </authorList>
    </citation>
    <scope>IDENTIFICATION BY MASS SPECTROMETRY</scope>
    <scope>FUNCTION</scope>
    <scope>COFACTOR</scope>
    <scope>SUBUNIT</scope>
    <scope>TISSUE SPECIFICITY</scope>
</reference>
<organism evidence="9">
    <name type="scientific">Dipetalogaster maximus</name>
    <name type="common">Blood-sucking bug</name>
    <dbReference type="NCBI Taxonomy" id="72496"/>
    <lineage>
        <taxon>Eukaryota</taxon>
        <taxon>Metazoa</taxon>
        <taxon>Ecdysozoa</taxon>
        <taxon>Arthropoda</taxon>
        <taxon>Hexapoda</taxon>
        <taxon>Insecta</taxon>
        <taxon>Pterygota</taxon>
        <taxon>Neoptera</taxon>
        <taxon>Paraneoptera</taxon>
        <taxon>Hemiptera</taxon>
        <taxon>Heteroptera</taxon>
        <taxon>Panheteroptera</taxon>
        <taxon>Cimicomorpha</taxon>
        <taxon>Reduviidae</taxon>
        <taxon>Triatominae</taxon>
        <taxon>Dipetalogaster</taxon>
    </lineage>
</organism>
<keyword id="KW-0049">Antioxidant</keyword>
<keyword id="KW-0325">Glycoprotein</keyword>
<keyword id="KW-1199">Hemostasis impairing toxin</keyword>
<keyword id="KW-0358">Heparin-binding</keyword>
<keyword id="KW-0479">Metal-binding</keyword>
<keyword id="KW-1201">Platelet aggregation inhibiting toxin</keyword>
<keyword id="KW-0964">Secreted</keyword>
<keyword id="KW-0732">Signal</keyword>
<keyword id="KW-0800">Toxin</keyword>
<feature type="signal peptide" evidence="1">
    <location>
        <begin position="1"/>
        <end position="26"/>
    </location>
</feature>
<feature type="chain" id="PRO_5003442909" description="Salivary antigen-5" evidence="1">
    <location>
        <begin position="27"/>
        <end position="249"/>
    </location>
</feature>
<feature type="domain" description="SCP" evidence="1">
    <location>
        <begin position="50"/>
        <end position="193"/>
    </location>
</feature>
<feature type="glycosylation site" description="N-linked (GlcNAc...) asparagine" evidence="2">
    <location>
        <position position="57"/>
    </location>
</feature>
<feature type="glycosylation site" description="N-linked (GlcNAc...) asparagine" evidence="2">
    <location>
        <position position="127"/>
    </location>
</feature>
<feature type="glycosylation site" description="N-linked (GlcNAc...) asparagine" evidence="2">
    <location>
        <position position="168"/>
    </location>
</feature>
<feature type="sequence conflict" description="In Ref. 1; AEM97975." evidence="7" ref="1">
    <original>Q</original>
    <variation>H</variation>
    <location>
        <position position="5"/>
    </location>
</feature>
<feature type="sequence conflict" description="In Ref. 1; AEM97975." evidence="7" ref="1">
    <original>A</original>
    <variation>V</variation>
    <location>
        <position position="14"/>
    </location>
</feature>
<feature type="sequence conflict" description="In Ref. 1; AEM97975." evidence="7" ref="1">
    <original>Q</original>
    <variation>P</variation>
    <location>
        <position position="22"/>
    </location>
</feature>
<feature type="sequence conflict" description="In Ref. 1; AEM97975." evidence="7" ref="1">
    <original>T</original>
    <variation>K</variation>
    <location>
        <position position="41"/>
    </location>
</feature>
<feature type="sequence conflict" description="In Ref. 1; AEM97975." evidence="7" ref="1">
    <original>I</original>
    <variation>V</variation>
    <location>
        <position position="51"/>
    </location>
</feature>
<feature type="sequence conflict" description="In Ref. 1; AEM97975." evidence="7" ref="1">
    <original>Y</original>
    <variation>N</variation>
    <location>
        <position position="67"/>
    </location>
</feature>
<feature type="sequence conflict" description="In Ref. 1; AEM97975." evidence="7" ref="1">
    <original>K</original>
    <variation>S</variation>
    <location>
        <position position="106"/>
    </location>
</feature>
<feature type="sequence conflict" description="In Ref. 1; AEM97975." evidence="7" ref="1">
    <original>K</original>
    <variation>E</variation>
    <location>
        <position position="118"/>
    </location>
</feature>
<name>VA5_DIPMA</name>
<accession>G3CJR9</accession>
<accession>G3CJS1</accession>
<sequence>MAKTQCPLVFSLLALALIGTLQSSAAQCQNSNQFLGSLEITGKYRKAVVSIHNYYRNLTAAGEAGEYYKQPPAENMLQLTWDDDAASKAVELANTCVFGHDGAKDKDDKPMGQNIALKMSSTQSDVNKSYDEWMTGMVKDWFDEVKDYSFGSGFSSGTGHYTQIVWANTSKVGCGYSYYKEGTWYAGYLVCNYKPPGNWYGQDPYIQGNVNCEKHNLGRSKNYNNLCVTKRKKKNNKSGSTQRTNFQEK</sequence>
<dbReference type="EMBL" id="HP639836">
    <property type="protein sequence ID" value="AEM97973.1"/>
    <property type="molecule type" value="mRNA"/>
</dbReference>
<dbReference type="EMBL" id="HP639838">
    <property type="protein sequence ID" value="AEM97975.1"/>
    <property type="molecule type" value="mRNA"/>
</dbReference>
<dbReference type="SMR" id="G3CJR9"/>
<dbReference type="GO" id="GO:0005615">
    <property type="term" value="C:extracellular space"/>
    <property type="evidence" value="ECO:0000314"/>
    <property type="project" value="UniProtKB"/>
</dbReference>
<dbReference type="GO" id="GO:0016209">
    <property type="term" value="F:antioxidant activity"/>
    <property type="evidence" value="ECO:0000314"/>
    <property type="project" value="UniProtKB"/>
</dbReference>
<dbReference type="GO" id="GO:1903135">
    <property type="term" value="F:cupric ion binding"/>
    <property type="evidence" value="ECO:0000314"/>
    <property type="project" value="UniProtKB"/>
</dbReference>
<dbReference type="GO" id="GO:1904399">
    <property type="term" value="F:heparan sulfate binding"/>
    <property type="evidence" value="ECO:0000314"/>
    <property type="project" value="UniProtKB"/>
</dbReference>
<dbReference type="GO" id="GO:0008201">
    <property type="term" value="F:heparin binding"/>
    <property type="evidence" value="ECO:0000314"/>
    <property type="project" value="UniProtKB"/>
</dbReference>
<dbReference type="GO" id="GO:0090729">
    <property type="term" value="F:toxin activity"/>
    <property type="evidence" value="ECO:0007669"/>
    <property type="project" value="UniProtKB-KW"/>
</dbReference>
<dbReference type="GO" id="GO:0006801">
    <property type="term" value="P:superoxide metabolic process"/>
    <property type="evidence" value="ECO:0000314"/>
    <property type="project" value="UniProtKB"/>
</dbReference>
<dbReference type="GO" id="GO:0035893">
    <property type="term" value="P:suppression of platelet aggregation in another organism"/>
    <property type="evidence" value="ECO:0000314"/>
    <property type="project" value="UniProtKB"/>
</dbReference>
<dbReference type="CDD" id="cd05380">
    <property type="entry name" value="CAP_euk"/>
    <property type="match status" value="1"/>
</dbReference>
<dbReference type="Gene3D" id="3.40.33.10">
    <property type="entry name" value="CAP"/>
    <property type="match status" value="1"/>
</dbReference>
<dbReference type="InterPro" id="IPR018244">
    <property type="entry name" value="Allrgn_V5/Tpx1_CS"/>
</dbReference>
<dbReference type="InterPro" id="IPR014044">
    <property type="entry name" value="CAP_dom"/>
</dbReference>
<dbReference type="InterPro" id="IPR035940">
    <property type="entry name" value="CAP_sf"/>
</dbReference>
<dbReference type="InterPro" id="IPR001283">
    <property type="entry name" value="CRISP-related"/>
</dbReference>
<dbReference type="InterPro" id="IPR002413">
    <property type="entry name" value="V5_allergen-like"/>
</dbReference>
<dbReference type="PANTHER" id="PTHR10334">
    <property type="entry name" value="CYSTEINE-RICH SECRETORY PROTEIN-RELATED"/>
    <property type="match status" value="1"/>
</dbReference>
<dbReference type="Pfam" id="PF00188">
    <property type="entry name" value="CAP"/>
    <property type="match status" value="1"/>
</dbReference>
<dbReference type="PRINTS" id="PR00838">
    <property type="entry name" value="V5ALLERGEN"/>
</dbReference>
<dbReference type="PRINTS" id="PR00837">
    <property type="entry name" value="V5TPXLIKE"/>
</dbReference>
<dbReference type="SMART" id="SM00198">
    <property type="entry name" value="SCP"/>
    <property type="match status" value="1"/>
</dbReference>
<dbReference type="SUPFAM" id="SSF55797">
    <property type="entry name" value="PR-1-like"/>
    <property type="match status" value="1"/>
</dbReference>
<dbReference type="PROSITE" id="PS01009">
    <property type="entry name" value="CRISP_1"/>
    <property type="match status" value="1"/>
</dbReference>
<dbReference type="PROSITE" id="PS01010">
    <property type="entry name" value="CRISP_2"/>
    <property type="match status" value="1"/>
</dbReference>